<comment type="subunit">
    <text evidence="1">Part of the 50S ribosomal subunit.</text>
</comment>
<comment type="similarity">
    <text evidence="1">Belongs to the universal ribosomal protein uL30 family.</text>
</comment>
<comment type="sequence caution" evidence="2">
    <conflict type="erroneous initiation">
        <sequence resource="EMBL-CDS" id="AAY50366"/>
    </conflict>
</comment>
<gene>
    <name evidence="1" type="primary">rpmD</name>
    <name type="ordered locus">XC_3322</name>
</gene>
<reference key="1">
    <citation type="journal article" date="2005" name="Genome Res.">
        <title>Comparative and functional genomic analyses of the pathogenicity of phytopathogen Xanthomonas campestris pv. campestris.</title>
        <authorList>
            <person name="Qian W."/>
            <person name="Jia Y."/>
            <person name="Ren S.-X."/>
            <person name="He Y.-Q."/>
            <person name="Feng J.-X."/>
            <person name="Lu L.-F."/>
            <person name="Sun Q."/>
            <person name="Ying G."/>
            <person name="Tang D.-J."/>
            <person name="Tang H."/>
            <person name="Wu W."/>
            <person name="Hao P."/>
            <person name="Wang L."/>
            <person name="Jiang B.-L."/>
            <person name="Zeng S."/>
            <person name="Gu W.-Y."/>
            <person name="Lu G."/>
            <person name="Rong L."/>
            <person name="Tian Y."/>
            <person name="Yao Z."/>
            <person name="Fu G."/>
            <person name="Chen B."/>
            <person name="Fang R."/>
            <person name="Qiang B."/>
            <person name="Chen Z."/>
            <person name="Zhao G.-P."/>
            <person name="Tang J.-L."/>
            <person name="He C."/>
        </authorList>
    </citation>
    <scope>NUCLEOTIDE SEQUENCE [LARGE SCALE GENOMIC DNA]</scope>
    <source>
        <strain>8004</strain>
    </source>
</reference>
<accession>Q4URF7</accession>
<dbReference type="EMBL" id="CP000050">
    <property type="protein sequence ID" value="AAY50366.1"/>
    <property type="status" value="ALT_INIT"/>
    <property type="molecule type" value="Genomic_DNA"/>
</dbReference>
<dbReference type="RefSeq" id="WP_006450646.1">
    <property type="nucleotide sequence ID" value="NZ_CP155948.1"/>
</dbReference>
<dbReference type="SMR" id="Q4URF7"/>
<dbReference type="GeneID" id="95583332"/>
<dbReference type="KEGG" id="xcb:XC_3322"/>
<dbReference type="HOGENOM" id="CLU_131047_1_4_6"/>
<dbReference type="Proteomes" id="UP000000420">
    <property type="component" value="Chromosome"/>
</dbReference>
<dbReference type="GO" id="GO:0022625">
    <property type="term" value="C:cytosolic large ribosomal subunit"/>
    <property type="evidence" value="ECO:0007669"/>
    <property type="project" value="TreeGrafter"/>
</dbReference>
<dbReference type="GO" id="GO:0003735">
    <property type="term" value="F:structural constituent of ribosome"/>
    <property type="evidence" value="ECO:0007669"/>
    <property type="project" value="InterPro"/>
</dbReference>
<dbReference type="GO" id="GO:0006412">
    <property type="term" value="P:translation"/>
    <property type="evidence" value="ECO:0007669"/>
    <property type="project" value="UniProtKB-UniRule"/>
</dbReference>
<dbReference type="CDD" id="cd00355">
    <property type="entry name" value="Ribosomal_L30_like"/>
    <property type="match status" value="1"/>
</dbReference>
<dbReference type="FunFam" id="3.30.1390.20:FF:000006">
    <property type="entry name" value="50S ribosomal protein L30"/>
    <property type="match status" value="1"/>
</dbReference>
<dbReference type="Gene3D" id="3.30.1390.20">
    <property type="entry name" value="Ribosomal protein L30, ferredoxin-like fold domain"/>
    <property type="match status" value="1"/>
</dbReference>
<dbReference type="HAMAP" id="MF_01371_B">
    <property type="entry name" value="Ribosomal_uL30_B"/>
    <property type="match status" value="1"/>
</dbReference>
<dbReference type="InterPro" id="IPR036919">
    <property type="entry name" value="Ribo_uL30_ferredoxin-like_sf"/>
</dbReference>
<dbReference type="InterPro" id="IPR005996">
    <property type="entry name" value="Ribosomal_uL30_bac-type"/>
</dbReference>
<dbReference type="InterPro" id="IPR016082">
    <property type="entry name" value="Ribosomal_uL30_ferredoxin-like"/>
</dbReference>
<dbReference type="NCBIfam" id="TIGR01308">
    <property type="entry name" value="rpmD_bact"/>
    <property type="match status" value="1"/>
</dbReference>
<dbReference type="PANTHER" id="PTHR15892:SF2">
    <property type="entry name" value="LARGE RIBOSOMAL SUBUNIT PROTEIN UL30M"/>
    <property type="match status" value="1"/>
</dbReference>
<dbReference type="PANTHER" id="PTHR15892">
    <property type="entry name" value="MITOCHONDRIAL RIBOSOMAL PROTEIN L30"/>
    <property type="match status" value="1"/>
</dbReference>
<dbReference type="Pfam" id="PF00327">
    <property type="entry name" value="Ribosomal_L30"/>
    <property type="match status" value="1"/>
</dbReference>
<dbReference type="PIRSF" id="PIRSF002211">
    <property type="entry name" value="Ribosomal_L30_bac-type"/>
    <property type="match status" value="1"/>
</dbReference>
<dbReference type="SUPFAM" id="SSF55129">
    <property type="entry name" value="Ribosomal protein L30p/L7e"/>
    <property type="match status" value="1"/>
</dbReference>
<proteinExistence type="inferred from homology"/>
<sequence>MAKDTGKTVKVRLVRGLRGTQSRHRLSVHALGLNKINDVRELKDSPQVRGLINTVHYLVKVED</sequence>
<keyword id="KW-0687">Ribonucleoprotein</keyword>
<keyword id="KW-0689">Ribosomal protein</keyword>
<protein>
    <recommendedName>
        <fullName evidence="1">Large ribosomal subunit protein uL30</fullName>
    </recommendedName>
    <alternativeName>
        <fullName evidence="2">50S ribosomal protein L30</fullName>
    </alternativeName>
</protein>
<evidence type="ECO:0000255" key="1">
    <source>
        <dbReference type="HAMAP-Rule" id="MF_01371"/>
    </source>
</evidence>
<evidence type="ECO:0000305" key="2"/>
<organism>
    <name type="scientific">Xanthomonas campestris pv. campestris (strain 8004)</name>
    <dbReference type="NCBI Taxonomy" id="314565"/>
    <lineage>
        <taxon>Bacteria</taxon>
        <taxon>Pseudomonadati</taxon>
        <taxon>Pseudomonadota</taxon>
        <taxon>Gammaproteobacteria</taxon>
        <taxon>Lysobacterales</taxon>
        <taxon>Lysobacteraceae</taxon>
        <taxon>Xanthomonas</taxon>
    </lineage>
</organism>
<name>RL30_XANC8</name>
<feature type="chain" id="PRO_0000273892" description="Large ribosomal subunit protein uL30">
    <location>
        <begin position="1"/>
        <end position="63"/>
    </location>
</feature>